<dbReference type="EMBL" id="M34550">
    <property type="protein sequence ID" value="AAA29150.1"/>
    <property type="molecule type" value="Genomic_DNA"/>
</dbReference>
<dbReference type="PIR" id="A45645">
    <property type="entry name" value="A45645"/>
</dbReference>
<dbReference type="RefSeq" id="XP_001706958.1">
    <property type="nucleotide sequence ID" value="XM_001706906.1"/>
</dbReference>
<dbReference type="SMR" id="P19389"/>
<dbReference type="GeneID" id="5699853"/>
<dbReference type="KEGG" id="gla:GL50803_007796"/>
<dbReference type="VEuPathDB" id="GiardiaDB:DHA2_7796"/>
<dbReference type="VEuPathDB" id="GiardiaDB:GL50581_1672"/>
<dbReference type="VEuPathDB" id="GiardiaDB:GL50803_007796"/>
<dbReference type="VEuPathDB" id="GiardiaDB:QR46_1873"/>
<dbReference type="OrthoDB" id="37886at2759"/>
<dbReference type="GO" id="GO:0005737">
    <property type="term" value="C:cytoplasm"/>
    <property type="evidence" value="ECO:0007669"/>
    <property type="project" value="UniProtKB-KW"/>
</dbReference>
<dbReference type="GO" id="GO:0005874">
    <property type="term" value="C:microtubule"/>
    <property type="evidence" value="ECO:0007669"/>
    <property type="project" value="UniProtKB-KW"/>
</dbReference>
<dbReference type="GO" id="GO:0005886">
    <property type="term" value="C:plasma membrane"/>
    <property type="evidence" value="ECO:0007669"/>
    <property type="project" value="TreeGrafter"/>
</dbReference>
<dbReference type="GO" id="GO:0005509">
    <property type="term" value="F:calcium ion binding"/>
    <property type="evidence" value="ECO:0007669"/>
    <property type="project" value="InterPro"/>
</dbReference>
<dbReference type="GO" id="GO:0005544">
    <property type="term" value="F:calcium-dependent phospholipid binding"/>
    <property type="evidence" value="ECO:0007669"/>
    <property type="project" value="InterPro"/>
</dbReference>
<dbReference type="GO" id="GO:0001786">
    <property type="term" value="F:phosphatidylserine binding"/>
    <property type="evidence" value="ECO:0007669"/>
    <property type="project" value="TreeGrafter"/>
</dbReference>
<dbReference type="GO" id="GO:0007010">
    <property type="term" value="P:cytoskeleton organization"/>
    <property type="evidence" value="ECO:0007669"/>
    <property type="project" value="InterPro"/>
</dbReference>
<dbReference type="Gene3D" id="1.10.220.10">
    <property type="entry name" value="Annexin"/>
    <property type="match status" value="4"/>
</dbReference>
<dbReference type="InterPro" id="IPR008088">
    <property type="entry name" value="Alpha_giardin"/>
</dbReference>
<dbReference type="InterPro" id="IPR018502">
    <property type="entry name" value="Annexin_repeat"/>
</dbReference>
<dbReference type="InterPro" id="IPR037104">
    <property type="entry name" value="Annexin_sf"/>
</dbReference>
<dbReference type="PANTHER" id="PTHR10502">
    <property type="entry name" value="ANNEXIN"/>
    <property type="match status" value="1"/>
</dbReference>
<dbReference type="PANTHER" id="PTHR10502:SF102">
    <property type="entry name" value="ANNEXIN B11"/>
    <property type="match status" value="1"/>
</dbReference>
<dbReference type="Pfam" id="PF00191">
    <property type="entry name" value="Annexin"/>
    <property type="match status" value="1"/>
</dbReference>
<dbReference type="Pfam" id="PF22293">
    <property type="entry name" value="ANXE1_4th"/>
    <property type="match status" value="1"/>
</dbReference>
<dbReference type="PRINTS" id="PR01712">
    <property type="entry name" value="ALPHAGIARDIN"/>
</dbReference>
<dbReference type="SMART" id="SM00335">
    <property type="entry name" value="ANX"/>
    <property type="match status" value="1"/>
</dbReference>
<dbReference type="SUPFAM" id="SSF47874">
    <property type="entry name" value="Annexin"/>
    <property type="match status" value="1"/>
</dbReference>
<dbReference type="PROSITE" id="PS51897">
    <property type="entry name" value="ANNEXIN_2"/>
    <property type="match status" value="4"/>
</dbReference>
<evidence type="ECO:0000255" key="1">
    <source>
        <dbReference type="PROSITE-ProRule" id="PRU01245"/>
    </source>
</evidence>
<protein>
    <recommendedName>
        <fullName>Giardin subunit alpha-2</fullName>
    </recommendedName>
</protein>
<accession>P19389</accession>
<keyword id="KW-0041">Annexin</keyword>
<keyword id="KW-0963">Cytoplasm</keyword>
<keyword id="KW-0206">Cytoskeleton</keyword>
<keyword id="KW-0493">Microtubule</keyword>
<keyword id="KW-0677">Repeat</keyword>
<organism>
    <name type="scientific">Giardia intestinalis</name>
    <name type="common">Giardia lamblia</name>
    <dbReference type="NCBI Taxonomy" id="5741"/>
    <lineage>
        <taxon>Eukaryota</taxon>
        <taxon>Metamonada</taxon>
        <taxon>Diplomonadida</taxon>
        <taxon>Hexamitidae</taxon>
        <taxon>Giardiinae</taxon>
        <taxon>Giardia</taxon>
    </lineage>
</organism>
<comment type="function">
    <text>Giardins are involved in parasite attachment to the intestinal mucosa and in the cytoskeletal disassembly and reassembly that marks the transition from infectious trophozoite to transmissible cyst. They may interact with other cytoskeletal proteins such as microtubules in the microribbons or crossbridges, to maintain the integrity of the ventral disk.</text>
</comment>
<comment type="subcellular location">
    <subcellularLocation>
        <location>Cytoplasm</location>
        <location>Cytoskeleton</location>
    </subcellularLocation>
    <text>Most likely in the edges of the ventral disk microribbons.</text>
</comment>
<comment type="similarity">
    <text evidence="1">Belongs to the annexin family. Giardin subunit alpha subfamily.</text>
</comment>
<name>GIA2_GIAIN</name>
<sequence>MPKLSQIVADMKQAIDAKDEAQIAFIASEYSADARQRIAQGYRDQYGKELPDDIKKALKGGSEESLLMDLFSDRHEVRAQHIRDALSGKNDHMAFFDTVILCTPEDWHETVAAYTRMFKKPLVEDFMKDVGRKENWCLFMEKWMAHERTSREGSPDEEAEKLNKAFSESDHDYISSFMAGVPPEEYKSINTSFKSLTGKGIDQAFATIYTGTDYYSLYCAHFALLGMHKLAAYLVNCACNDKGDEKRMRRITGMMVDKCLAAKYAYKTYGSMKADVERCFDKRMAPILCTLWRLRE</sequence>
<feature type="chain" id="PRO_0000067523" description="Giardin subunit alpha-2">
    <location>
        <begin position="1"/>
        <end position="296"/>
    </location>
</feature>
<feature type="repeat" description="Annexin 1" evidence="1">
    <location>
        <begin position="2"/>
        <end position="71"/>
    </location>
</feature>
<feature type="repeat" description="Annexin 2" evidence="1">
    <location>
        <begin position="73"/>
        <end position="143"/>
    </location>
</feature>
<feature type="repeat" description="Annexin 3" evidence="1">
    <location>
        <begin position="153"/>
        <end position="223"/>
    </location>
</feature>
<feature type="repeat" description="Annexin 4" evidence="1">
    <location>
        <begin position="226"/>
        <end position="293"/>
    </location>
</feature>
<proteinExistence type="inferred from homology"/>
<reference key="1">
    <citation type="journal article" date="1992" name="Mol. Biochem. Parasitol.">
        <title>Nucleotide sequence of a second alpha giardin gene and molecular analysis of the alpha giardin genes and transcripts in Giardia lamblia.</title>
        <authorList>
            <person name="Alonso R.A."/>
            <person name="Peattie D.A."/>
        </authorList>
    </citation>
    <scope>NUCLEOTIDE SEQUENCE [GENOMIC DNA]</scope>
    <source>
        <strain>Portland-1</strain>
    </source>
</reference>